<name>RS8_LEUCK</name>
<dbReference type="EMBL" id="DQ489736">
    <property type="protein sequence ID" value="ACA83405.1"/>
    <property type="molecule type" value="Genomic_DNA"/>
</dbReference>
<dbReference type="RefSeq" id="WP_004899444.1">
    <property type="nucleotide sequence ID" value="NC_010471.1"/>
</dbReference>
<dbReference type="SMR" id="B1MW01"/>
<dbReference type="STRING" id="349519.LCK_01582"/>
<dbReference type="GeneID" id="61103254"/>
<dbReference type="KEGG" id="lci:LCK_01582"/>
<dbReference type="eggNOG" id="COG0096">
    <property type="taxonomic scope" value="Bacteria"/>
</dbReference>
<dbReference type="HOGENOM" id="CLU_098428_0_2_9"/>
<dbReference type="OrthoDB" id="9802617at2"/>
<dbReference type="Proteomes" id="UP000002166">
    <property type="component" value="Chromosome"/>
</dbReference>
<dbReference type="GO" id="GO:1990904">
    <property type="term" value="C:ribonucleoprotein complex"/>
    <property type="evidence" value="ECO:0007669"/>
    <property type="project" value="UniProtKB-KW"/>
</dbReference>
<dbReference type="GO" id="GO:0005840">
    <property type="term" value="C:ribosome"/>
    <property type="evidence" value="ECO:0007669"/>
    <property type="project" value="UniProtKB-KW"/>
</dbReference>
<dbReference type="GO" id="GO:0019843">
    <property type="term" value="F:rRNA binding"/>
    <property type="evidence" value="ECO:0007669"/>
    <property type="project" value="UniProtKB-UniRule"/>
</dbReference>
<dbReference type="GO" id="GO:0003735">
    <property type="term" value="F:structural constituent of ribosome"/>
    <property type="evidence" value="ECO:0007669"/>
    <property type="project" value="InterPro"/>
</dbReference>
<dbReference type="GO" id="GO:0006412">
    <property type="term" value="P:translation"/>
    <property type="evidence" value="ECO:0007669"/>
    <property type="project" value="UniProtKB-UniRule"/>
</dbReference>
<dbReference type="FunFam" id="3.30.1370.30:FF:000002">
    <property type="entry name" value="30S ribosomal protein S8"/>
    <property type="match status" value="1"/>
</dbReference>
<dbReference type="FunFam" id="3.30.1490.10:FF:000001">
    <property type="entry name" value="30S ribosomal protein S8"/>
    <property type="match status" value="1"/>
</dbReference>
<dbReference type="Gene3D" id="3.30.1370.30">
    <property type="match status" value="1"/>
</dbReference>
<dbReference type="Gene3D" id="3.30.1490.10">
    <property type="match status" value="1"/>
</dbReference>
<dbReference type="HAMAP" id="MF_01302_B">
    <property type="entry name" value="Ribosomal_uS8_B"/>
    <property type="match status" value="1"/>
</dbReference>
<dbReference type="InterPro" id="IPR000630">
    <property type="entry name" value="Ribosomal_uS8"/>
</dbReference>
<dbReference type="InterPro" id="IPR047863">
    <property type="entry name" value="Ribosomal_uS8_CS"/>
</dbReference>
<dbReference type="InterPro" id="IPR035987">
    <property type="entry name" value="Ribosomal_uS8_sf"/>
</dbReference>
<dbReference type="NCBIfam" id="NF001109">
    <property type="entry name" value="PRK00136.1"/>
    <property type="match status" value="1"/>
</dbReference>
<dbReference type="PANTHER" id="PTHR11758">
    <property type="entry name" value="40S RIBOSOMAL PROTEIN S15A"/>
    <property type="match status" value="1"/>
</dbReference>
<dbReference type="Pfam" id="PF00410">
    <property type="entry name" value="Ribosomal_S8"/>
    <property type="match status" value="1"/>
</dbReference>
<dbReference type="SUPFAM" id="SSF56047">
    <property type="entry name" value="Ribosomal protein S8"/>
    <property type="match status" value="1"/>
</dbReference>
<dbReference type="PROSITE" id="PS00053">
    <property type="entry name" value="RIBOSOMAL_S8"/>
    <property type="match status" value="1"/>
</dbReference>
<protein>
    <recommendedName>
        <fullName evidence="1">Small ribosomal subunit protein uS8</fullName>
    </recommendedName>
    <alternativeName>
        <fullName evidence="2">30S ribosomal protein S8</fullName>
    </alternativeName>
</protein>
<keyword id="KW-1185">Reference proteome</keyword>
<keyword id="KW-0687">Ribonucleoprotein</keyword>
<keyword id="KW-0689">Ribosomal protein</keyword>
<keyword id="KW-0694">RNA-binding</keyword>
<keyword id="KW-0699">rRNA-binding</keyword>
<reference key="1">
    <citation type="journal article" date="2008" name="J. Bacteriol.">
        <title>Complete genome sequence of Leuconostoc citreum KM20.</title>
        <authorList>
            <person name="Kim J.F."/>
            <person name="Jeong H."/>
            <person name="Lee J.-S."/>
            <person name="Choi S.-H."/>
            <person name="Ha M."/>
            <person name="Hur C.-G."/>
            <person name="Kim J.-S."/>
            <person name="Lee S."/>
            <person name="Park H.-S."/>
            <person name="Park Y.-H."/>
            <person name="Oh T.K."/>
        </authorList>
    </citation>
    <scope>NUCLEOTIDE SEQUENCE [LARGE SCALE GENOMIC DNA]</scope>
    <source>
        <strain>KM20</strain>
    </source>
</reference>
<evidence type="ECO:0000255" key="1">
    <source>
        <dbReference type="HAMAP-Rule" id="MF_01302"/>
    </source>
</evidence>
<evidence type="ECO:0000305" key="2"/>
<feature type="chain" id="PRO_1000140577" description="Small ribosomal subunit protein uS8">
    <location>
        <begin position="1"/>
        <end position="132"/>
    </location>
</feature>
<comment type="function">
    <text evidence="1">One of the primary rRNA binding proteins, it binds directly to 16S rRNA central domain where it helps coordinate assembly of the platform of the 30S subunit.</text>
</comment>
<comment type="subunit">
    <text evidence="1">Part of the 30S ribosomal subunit. Contacts proteins S5 and S12.</text>
</comment>
<comment type="similarity">
    <text evidence="1">Belongs to the universal ribosomal protein uS8 family.</text>
</comment>
<gene>
    <name evidence="1" type="primary">rpsH</name>
    <name type="ordered locus">LCK_01582</name>
</gene>
<accession>B1MW01</accession>
<proteinExistence type="inferred from homology"/>
<sequence>MSMTDPIADLLTRIRNANLAHHEVVEIPASKIKKSIAEILKSEGFIRDVEYIEDNKQGVIRVFLKYGEDRNRVITGIKRISKPGLRKYAKADSLPKVLNGLGIAIISTSAGVITDKEARSKQVGGEVIAYVW</sequence>
<organism>
    <name type="scientific">Leuconostoc citreum (strain KM20)</name>
    <dbReference type="NCBI Taxonomy" id="349519"/>
    <lineage>
        <taxon>Bacteria</taxon>
        <taxon>Bacillati</taxon>
        <taxon>Bacillota</taxon>
        <taxon>Bacilli</taxon>
        <taxon>Lactobacillales</taxon>
        <taxon>Lactobacillaceae</taxon>
        <taxon>Leuconostoc</taxon>
    </lineage>
</organism>